<organism>
    <name type="scientific">Bos taurus</name>
    <name type="common">Bovine</name>
    <dbReference type="NCBI Taxonomy" id="9913"/>
    <lineage>
        <taxon>Eukaryota</taxon>
        <taxon>Metazoa</taxon>
        <taxon>Chordata</taxon>
        <taxon>Craniata</taxon>
        <taxon>Vertebrata</taxon>
        <taxon>Euteleostomi</taxon>
        <taxon>Mammalia</taxon>
        <taxon>Eutheria</taxon>
        <taxon>Laurasiatheria</taxon>
        <taxon>Artiodactyla</taxon>
        <taxon>Ruminantia</taxon>
        <taxon>Pecora</taxon>
        <taxon>Bovidae</taxon>
        <taxon>Bovinae</taxon>
        <taxon>Bos</taxon>
    </lineage>
</organism>
<sequence>MKLYSLSVLYKGESKTVLLKAAYDVSSFSFFQRSSVQEFMTFTSQLIVERSAKGSRASVKEQEYLCHVYVRNDSLAGVVIADSEYPSRVAFTLLEKVLDEFSKQVDRIDWPTGSPDTIRYSGLDSQLSRYQNPREADPMTKVQAELDETKIILHNTMESLLERGEKLDDLVSKSEVLGIQSKAFYKTARKQNSCCAIM</sequence>
<comment type="function">
    <text evidence="2">Vesicular soluble NSF attachment protein receptor (v-SNARE) mediating vesicle docking and fusion to a specific acceptor cellular compartment. Functions in endoplasmic reticulum to Golgi transport; as part of a SNARE complex composed of GOSR1, GOSR2 and STX5. Functions in early/recycling endosome to TGN transport; as part of a SNARE complex composed of BET1L, GOSR1 and STX5. Has a S-palmitoyl transferase activity.</text>
</comment>
<comment type="subunit">
    <text evidence="3">Identified in 2 different SNARE complexes; the first one composed of GOSR1, GOSR2 and STX5 and the second one composed of BET1L, GOSR1 and STX5.</text>
</comment>
<comment type="subcellular location">
    <subcellularLocation>
        <location evidence="1">Cytoplasm</location>
        <location evidence="1">Cytosol</location>
    </subcellularLocation>
    <subcellularLocation>
        <location evidence="1">Cytoplasmic vesicle membrane</location>
        <topology evidence="1">Lipid-anchor</topology>
        <orientation evidence="1">Cytoplasmic side</orientation>
    </subcellularLocation>
    <subcellularLocation>
        <location evidence="1">Golgi apparatus membrane</location>
        <topology evidence="1">Lipid-anchor</topology>
        <orientation evidence="1">Cytoplasmic side</orientation>
    </subcellularLocation>
    <text evidence="1">Probably cycles through vesicles between Golgi and endosomes.</text>
</comment>
<comment type="domain">
    <text evidence="1">The longin domain regulates palmitoylation and membrane targeting.</text>
</comment>
<comment type="PTM">
    <text evidence="2">Palmitoylated; catalyzes its own palmitoylation. Palmitoylation is required for Golgi targeting.</text>
</comment>
<comment type="PTM">
    <text evidence="2">Farnesylation is required for Golgi targeting.</text>
</comment>
<comment type="similarity">
    <text evidence="6">Belongs to the synaptobrevin family.</text>
</comment>
<name>YKT6_BOVIN</name>
<feature type="chain" id="PRO_0000280708" description="Synaptobrevin homolog YKT6">
    <location>
        <begin position="1"/>
        <end position="195"/>
    </location>
</feature>
<feature type="propeptide" id="PRO_0000396660" description="Removed in mature form" evidence="1">
    <location>
        <begin position="196"/>
        <end position="198"/>
    </location>
</feature>
<feature type="domain" description="Longin" evidence="4">
    <location>
        <begin position="8"/>
        <end position="131"/>
    </location>
</feature>
<feature type="domain" description="v-SNARE coiled-coil homology" evidence="5">
    <location>
        <begin position="138"/>
        <end position="198"/>
    </location>
</feature>
<feature type="modified residue" description="Phosphoserine" evidence="2">
    <location>
        <position position="159"/>
    </location>
</feature>
<feature type="modified residue" description="Cysteine methyl ester" evidence="1">
    <location>
        <position position="195"/>
    </location>
</feature>
<feature type="lipid moiety-binding region" description="S-palmitoyl cysteine" evidence="1">
    <location>
        <position position="194"/>
    </location>
</feature>
<feature type="lipid moiety-binding region" description="S-farnesyl cysteine" evidence="1">
    <location>
        <position position="195"/>
    </location>
</feature>
<gene>
    <name type="primary">YKT6</name>
</gene>
<proteinExistence type="evidence at transcript level"/>
<protein>
    <recommendedName>
        <fullName>Synaptobrevin homolog YKT6</fullName>
        <ecNumber>2.3.1.-</ecNumber>
    </recommendedName>
</protein>
<reference key="1">
    <citation type="submission" date="2005-08" db="EMBL/GenBank/DDBJ databases">
        <authorList>
            <consortium name="NIH - Mammalian Gene Collection (MGC) project"/>
        </authorList>
    </citation>
    <scope>NUCLEOTIDE SEQUENCE [LARGE SCALE MRNA]</scope>
    <source>
        <strain>Hereford</strain>
        <tissue>Testis</tissue>
    </source>
</reference>
<dbReference type="EC" id="2.3.1.-"/>
<dbReference type="EMBL" id="BC102627">
    <property type="protein sequence ID" value="AAI02628.1"/>
    <property type="molecule type" value="mRNA"/>
</dbReference>
<dbReference type="RefSeq" id="NP_001030219.1">
    <property type="nucleotide sequence ID" value="NM_001035047.1"/>
</dbReference>
<dbReference type="SMR" id="Q3T000"/>
<dbReference type="FunCoup" id="Q3T000">
    <property type="interactions" value="4577"/>
</dbReference>
<dbReference type="STRING" id="9913.ENSBTAP00000000341"/>
<dbReference type="PaxDb" id="9913-ENSBTAP00000000341"/>
<dbReference type="GeneID" id="507409"/>
<dbReference type="KEGG" id="bta:507409"/>
<dbReference type="CTD" id="10652"/>
<dbReference type="VEuPathDB" id="HostDB:ENSBTAG00000000274"/>
<dbReference type="eggNOG" id="KOG0861">
    <property type="taxonomic scope" value="Eukaryota"/>
</dbReference>
<dbReference type="HOGENOM" id="CLU_074848_3_0_1"/>
<dbReference type="InParanoid" id="Q3T000"/>
<dbReference type="OMA" id="HYIGIIR"/>
<dbReference type="OrthoDB" id="27923at2759"/>
<dbReference type="TreeFam" id="TF105606"/>
<dbReference type="Reactome" id="R-BTA-204005">
    <property type="pathway name" value="COPII-mediated vesicle transport"/>
</dbReference>
<dbReference type="Reactome" id="R-BTA-6807878">
    <property type="pathway name" value="COPI-mediated anterograde transport"/>
</dbReference>
<dbReference type="Reactome" id="R-BTA-6811438">
    <property type="pathway name" value="Intra-Golgi traffic"/>
</dbReference>
<dbReference type="Reactome" id="R-BTA-8980692">
    <property type="pathway name" value="RHOA GTPase cycle"/>
</dbReference>
<dbReference type="Reactome" id="R-BTA-9013148">
    <property type="pathway name" value="CDC42 GTPase cycle"/>
</dbReference>
<dbReference type="Reactome" id="R-BTA-9013149">
    <property type="pathway name" value="RAC1 GTPase cycle"/>
</dbReference>
<dbReference type="Reactome" id="R-BTA-9013408">
    <property type="pathway name" value="RHOG GTPase cycle"/>
</dbReference>
<dbReference type="Reactome" id="R-BTA-9013423">
    <property type="pathway name" value="RAC3 GTPase cycle"/>
</dbReference>
<dbReference type="Proteomes" id="UP000009136">
    <property type="component" value="Chromosome 4"/>
</dbReference>
<dbReference type="Bgee" id="ENSBTAG00000000274">
    <property type="expression patterns" value="Expressed in corpus epididymis and 108 other cell types or tissues"/>
</dbReference>
<dbReference type="GO" id="GO:0030659">
    <property type="term" value="C:cytoplasmic vesicle membrane"/>
    <property type="evidence" value="ECO:0007669"/>
    <property type="project" value="UniProtKB-SubCell"/>
</dbReference>
<dbReference type="GO" id="GO:0005829">
    <property type="term" value="C:cytosol"/>
    <property type="evidence" value="ECO:0007669"/>
    <property type="project" value="UniProtKB-SubCell"/>
</dbReference>
<dbReference type="GO" id="GO:0005783">
    <property type="term" value="C:endoplasmic reticulum"/>
    <property type="evidence" value="ECO:0000250"/>
    <property type="project" value="HGNC-UCL"/>
</dbReference>
<dbReference type="GO" id="GO:0005794">
    <property type="term" value="C:Golgi apparatus"/>
    <property type="evidence" value="ECO:0000318"/>
    <property type="project" value="GO_Central"/>
</dbReference>
<dbReference type="GO" id="GO:0000139">
    <property type="term" value="C:Golgi membrane"/>
    <property type="evidence" value="ECO:0007669"/>
    <property type="project" value="UniProtKB-SubCell"/>
</dbReference>
<dbReference type="GO" id="GO:0005886">
    <property type="term" value="C:plasma membrane"/>
    <property type="evidence" value="ECO:0000250"/>
    <property type="project" value="HGNC-UCL"/>
</dbReference>
<dbReference type="GO" id="GO:0019706">
    <property type="term" value="F:protein-cysteine S-palmitoyltransferase activity"/>
    <property type="evidence" value="ECO:0000250"/>
    <property type="project" value="HGNC-UCL"/>
</dbReference>
<dbReference type="GO" id="GO:0005484">
    <property type="term" value="F:SNAP receptor activity"/>
    <property type="evidence" value="ECO:0000318"/>
    <property type="project" value="GO_Central"/>
</dbReference>
<dbReference type="GO" id="GO:0006888">
    <property type="term" value="P:endoplasmic reticulum to Golgi vesicle-mediated transport"/>
    <property type="evidence" value="ECO:0000250"/>
    <property type="project" value="HGNC-UCL"/>
</dbReference>
<dbReference type="GO" id="GO:0015031">
    <property type="term" value="P:protein transport"/>
    <property type="evidence" value="ECO:0007669"/>
    <property type="project" value="UniProtKB-KW"/>
</dbReference>
<dbReference type="GO" id="GO:0006904">
    <property type="term" value="P:vesicle docking involved in exocytosis"/>
    <property type="evidence" value="ECO:0000250"/>
    <property type="project" value="HGNC-UCL"/>
</dbReference>
<dbReference type="GO" id="GO:0006903">
    <property type="term" value="P:vesicle targeting"/>
    <property type="evidence" value="ECO:0000250"/>
    <property type="project" value="HGNC-UCL"/>
</dbReference>
<dbReference type="CDD" id="cd14824">
    <property type="entry name" value="Longin"/>
    <property type="match status" value="1"/>
</dbReference>
<dbReference type="CDD" id="cd15867">
    <property type="entry name" value="R-SNARE_YKT6"/>
    <property type="match status" value="1"/>
</dbReference>
<dbReference type="FunFam" id="3.30.450.50:FF:000013">
    <property type="entry name" value="Synaptobrevin homolog YKT6"/>
    <property type="match status" value="1"/>
</dbReference>
<dbReference type="FunFam" id="1.20.5.110:FF:000020">
    <property type="entry name" value="synaptobrevin homolog YKT6"/>
    <property type="match status" value="1"/>
</dbReference>
<dbReference type="Gene3D" id="1.20.5.110">
    <property type="match status" value="1"/>
</dbReference>
<dbReference type="Gene3D" id="3.30.450.50">
    <property type="entry name" value="Longin domain"/>
    <property type="match status" value="1"/>
</dbReference>
<dbReference type="InterPro" id="IPR011012">
    <property type="entry name" value="Longin-like_dom_sf"/>
</dbReference>
<dbReference type="InterPro" id="IPR010908">
    <property type="entry name" value="Longin_dom"/>
</dbReference>
<dbReference type="InterPro" id="IPR045848">
    <property type="entry name" value="R-SNARE_YKT6"/>
</dbReference>
<dbReference type="InterPro" id="IPR042855">
    <property type="entry name" value="V_SNARE_CC"/>
</dbReference>
<dbReference type="PANTHER" id="PTHR45806">
    <property type="entry name" value="SYNAPTOBREVIN HOMOLOG YKT6"/>
    <property type="match status" value="1"/>
</dbReference>
<dbReference type="PANTHER" id="PTHR45806:SF1">
    <property type="entry name" value="SYNAPTOBREVIN HOMOLOG YKT6"/>
    <property type="match status" value="1"/>
</dbReference>
<dbReference type="Pfam" id="PF13774">
    <property type="entry name" value="Longin"/>
    <property type="match status" value="1"/>
</dbReference>
<dbReference type="Pfam" id="PF00957">
    <property type="entry name" value="Synaptobrevin"/>
    <property type="match status" value="1"/>
</dbReference>
<dbReference type="SMART" id="SM01270">
    <property type="entry name" value="Longin"/>
    <property type="match status" value="1"/>
</dbReference>
<dbReference type="SUPFAM" id="SSF58038">
    <property type="entry name" value="SNARE fusion complex"/>
    <property type="match status" value="1"/>
</dbReference>
<dbReference type="SUPFAM" id="SSF64356">
    <property type="entry name" value="SNARE-like"/>
    <property type="match status" value="1"/>
</dbReference>
<dbReference type="PROSITE" id="PS50859">
    <property type="entry name" value="LONGIN"/>
    <property type="match status" value="1"/>
</dbReference>
<dbReference type="PROSITE" id="PS50892">
    <property type="entry name" value="V_SNARE"/>
    <property type="match status" value="1"/>
</dbReference>
<accession>Q3T000</accession>
<keyword id="KW-0175">Coiled coil</keyword>
<keyword id="KW-0963">Cytoplasm</keyword>
<keyword id="KW-0968">Cytoplasmic vesicle</keyword>
<keyword id="KW-0931">ER-Golgi transport</keyword>
<keyword id="KW-0333">Golgi apparatus</keyword>
<keyword id="KW-0449">Lipoprotein</keyword>
<keyword id="KW-0472">Membrane</keyword>
<keyword id="KW-0488">Methylation</keyword>
<keyword id="KW-0564">Palmitate</keyword>
<keyword id="KW-0597">Phosphoprotein</keyword>
<keyword id="KW-0636">Prenylation</keyword>
<keyword id="KW-0653">Protein transport</keyword>
<keyword id="KW-1185">Reference proteome</keyword>
<keyword id="KW-0808">Transferase</keyword>
<keyword id="KW-0813">Transport</keyword>
<evidence type="ECO:0000250" key="1"/>
<evidence type="ECO:0000250" key="2">
    <source>
        <dbReference type="UniProtKB" id="O15498"/>
    </source>
</evidence>
<evidence type="ECO:0000250" key="3">
    <source>
        <dbReference type="UniProtKB" id="Q5EGY4"/>
    </source>
</evidence>
<evidence type="ECO:0000255" key="4">
    <source>
        <dbReference type="PROSITE-ProRule" id="PRU00231"/>
    </source>
</evidence>
<evidence type="ECO:0000255" key="5">
    <source>
        <dbReference type="PROSITE-ProRule" id="PRU00290"/>
    </source>
</evidence>
<evidence type="ECO:0000305" key="6"/>